<organism>
    <name type="scientific">Escherichia coli O17:K52:H18 (strain UMN026 / ExPEC)</name>
    <dbReference type="NCBI Taxonomy" id="585056"/>
    <lineage>
        <taxon>Bacteria</taxon>
        <taxon>Pseudomonadati</taxon>
        <taxon>Pseudomonadota</taxon>
        <taxon>Gammaproteobacteria</taxon>
        <taxon>Enterobacterales</taxon>
        <taxon>Enterobacteriaceae</taxon>
        <taxon>Escherichia</taxon>
    </lineage>
</organism>
<name>XNI_ECOLU</name>
<gene>
    <name evidence="1" type="primary">xni</name>
    <name evidence="1" type="synonym">ygdG</name>
    <name type="ordered locus">ECUMN_3127</name>
</gene>
<keyword id="KW-0238">DNA-binding</keyword>
<keyword id="KW-0255">Endonuclease</keyword>
<keyword id="KW-0378">Hydrolase</keyword>
<keyword id="KW-0460">Magnesium</keyword>
<keyword id="KW-0479">Metal-binding</keyword>
<keyword id="KW-0540">Nuclease</keyword>
<keyword id="KW-0630">Potassium</keyword>
<evidence type="ECO:0000255" key="1">
    <source>
        <dbReference type="HAMAP-Rule" id="MF_01192"/>
    </source>
</evidence>
<evidence type="ECO:0000305" key="2"/>
<dbReference type="EC" id="3.1.-.-" evidence="1"/>
<dbReference type="EMBL" id="CU928163">
    <property type="protein sequence ID" value="CAR14293.1"/>
    <property type="status" value="ALT_INIT"/>
    <property type="molecule type" value="Genomic_DNA"/>
</dbReference>
<dbReference type="RefSeq" id="WP_001309702.1">
    <property type="nucleotide sequence ID" value="NC_011751.1"/>
</dbReference>
<dbReference type="SMR" id="B7N732"/>
<dbReference type="STRING" id="585056.ECUMN_3127"/>
<dbReference type="KEGG" id="eum:ECUMN_3127"/>
<dbReference type="PATRIC" id="fig|585056.7.peg.3308"/>
<dbReference type="HOGENOM" id="CLU_004675_1_2_6"/>
<dbReference type="Proteomes" id="UP000007097">
    <property type="component" value="Chromosome"/>
</dbReference>
<dbReference type="GO" id="GO:0008409">
    <property type="term" value="F:5'-3' exonuclease activity"/>
    <property type="evidence" value="ECO:0007669"/>
    <property type="project" value="InterPro"/>
</dbReference>
<dbReference type="GO" id="GO:0017108">
    <property type="term" value="F:5'-flap endonuclease activity"/>
    <property type="evidence" value="ECO:0007669"/>
    <property type="project" value="UniProtKB-UniRule"/>
</dbReference>
<dbReference type="GO" id="GO:0003677">
    <property type="term" value="F:DNA binding"/>
    <property type="evidence" value="ECO:0007669"/>
    <property type="project" value="UniProtKB-UniRule"/>
</dbReference>
<dbReference type="GO" id="GO:0000287">
    <property type="term" value="F:magnesium ion binding"/>
    <property type="evidence" value="ECO:0007669"/>
    <property type="project" value="UniProtKB-UniRule"/>
</dbReference>
<dbReference type="GO" id="GO:0030955">
    <property type="term" value="F:potassium ion binding"/>
    <property type="evidence" value="ECO:0007669"/>
    <property type="project" value="UniProtKB-UniRule"/>
</dbReference>
<dbReference type="GO" id="GO:0033567">
    <property type="term" value="P:DNA replication, Okazaki fragment processing"/>
    <property type="evidence" value="ECO:0007669"/>
    <property type="project" value="UniProtKB-UniRule"/>
</dbReference>
<dbReference type="CDD" id="cd09898">
    <property type="entry name" value="H3TH_53EXO"/>
    <property type="match status" value="1"/>
</dbReference>
<dbReference type="CDD" id="cd09859">
    <property type="entry name" value="PIN_53EXO"/>
    <property type="match status" value="1"/>
</dbReference>
<dbReference type="FunFam" id="1.10.150.20:FF:000003">
    <property type="entry name" value="DNA polymerase I"/>
    <property type="match status" value="1"/>
</dbReference>
<dbReference type="FunFam" id="3.40.50.1010:FF:000011">
    <property type="entry name" value="Flap endonuclease Xni"/>
    <property type="match status" value="1"/>
</dbReference>
<dbReference type="Gene3D" id="1.10.150.20">
    <property type="entry name" value="5' to 3' exonuclease, C-terminal subdomain"/>
    <property type="match status" value="1"/>
</dbReference>
<dbReference type="Gene3D" id="3.40.50.1010">
    <property type="entry name" value="5'-nuclease"/>
    <property type="match status" value="1"/>
</dbReference>
<dbReference type="HAMAP" id="MF_01192">
    <property type="entry name" value="Xni"/>
    <property type="match status" value="1"/>
</dbReference>
<dbReference type="InterPro" id="IPR020046">
    <property type="entry name" value="5-3_exonucl_a-hlix_arch_N"/>
</dbReference>
<dbReference type="InterPro" id="IPR002421">
    <property type="entry name" value="5-3_exonuclease"/>
</dbReference>
<dbReference type="InterPro" id="IPR036279">
    <property type="entry name" value="5-3_exonuclease_C_sf"/>
</dbReference>
<dbReference type="InterPro" id="IPR020045">
    <property type="entry name" value="DNA_polI_H3TH"/>
</dbReference>
<dbReference type="InterPro" id="IPR038969">
    <property type="entry name" value="FEN"/>
</dbReference>
<dbReference type="InterPro" id="IPR008918">
    <property type="entry name" value="HhH2"/>
</dbReference>
<dbReference type="InterPro" id="IPR029060">
    <property type="entry name" value="PIN-like_dom_sf"/>
</dbReference>
<dbReference type="InterPro" id="IPR022895">
    <property type="entry name" value="Xni"/>
</dbReference>
<dbReference type="NCBIfam" id="NF007017">
    <property type="entry name" value="PRK09482.1"/>
    <property type="match status" value="1"/>
</dbReference>
<dbReference type="PANTHER" id="PTHR42646:SF2">
    <property type="entry name" value="5'-3' EXONUCLEASE FAMILY PROTEIN"/>
    <property type="match status" value="1"/>
</dbReference>
<dbReference type="PANTHER" id="PTHR42646">
    <property type="entry name" value="FLAP ENDONUCLEASE XNI"/>
    <property type="match status" value="1"/>
</dbReference>
<dbReference type="Pfam" id="PF01367">
    <property type="entry name" value="5_3_exonuc"/>
    <property type="match status" value="1"/>
</dbReference>
<dbReference type="Pfam" id="PF02739">
    <property type="entry name" value="5_3_exonuc_N"/>
    <property type="match status" value="1"/>
</dbReference>
<dbReference type="SMART" id="SM00475">
    <property type="entry name" value="53EXOc"/>
    <property type="match status" value="1"/>
</dbReference>
<dbReference type="SMART" id="SM00279">
    <property type="entry name" value="HhH2"/>
    <property type="match status" value="1"/>
</dbReference>
<dbReference type="SUPFAM" id="SSF47807">
    <property type="entry name" value="5' to 3' exonuclease, C-terminal subdomain"/>
    <property type="match status" value="1"/>
</dbReference>
<dbReference type="SUPFAM" id="SSF88723">
    <property type="entry name" value="PIN domain-like"/>
    <property type="match status" value="1"/>
</dbReference>
<comment type="function">
    <text evidence="1">Has flap endonuclease activity. During DNA replication, flap endonucleases cleave the 5'-overhanging flap structure that is generated by displacement synthesis when DNA polymerase encounters the 5'-end of a downstream Okazaki fragment.</text>
</comment>
<comment type="cofactor">
    <cofactor evidence="1">
        <name>Mg(2+)</name>
        <dbReference type="ChEBI" id="CHEBI:18420"/>
    </cofactor>
    <text evidence="1">Binds 2 Mg(2+) per subunit. Only one magnesium ion has a direct interaction with the protein, the other interactions are indirect.</text>
</comment>
<comment type="cofactor">
    <cofactor evidence="1">
        <name>K(+)</name>
        <dbReference type="ChEBI" id="CHEBI:29103"/>
    </cofactor>
    <text evidence="1">Binds 1 K(+) per subunit. The potassium ion strongly increases the affinity for DNA.</text>
</comment>
<comment type="similarity">
    <text evidence="1">Belongs to the Xni family.</text>
</comment>
<comment type="sequence caution" evidence="2">
    <conflict type="erroneous initiation">
        <sequence resource="EMBL-CDS" id="CAR14293"/>
    </conflict>
    <text>Extended N-terminus.</text>
</comment>
<protein>
    <recommendedName>
        <fullName evidence="1">Flap endonuclease Xni</fullName>
        <shortName evidence="1">FEN</shortName>
        <ecNumber evidence="1">3.1.-.-</ecNumber>
    </recommendedName>
</protein>
<proteinExistence type="inferred from homology"/>
<feature type="chain" id="PRO_1000138382" description="Flap endonuclease Xni">
    <location>
        <begin position="1"/>
        <end position="251"/>
    </location>
</feature>
<feature type="domain" description="5'-3' exonuclease" evidence="1">
    <location>
        <begin position="160"/>
        <end position="249"/>
    </location>
</feature>
<feature type="region of interest" description="Interaction with DNA" evidence="1">
    <location>
        <begin position="184"/>
        <end position="189"/>
    </location>
</feature>
<feature type="binding site" evidence="1">
    <location>
        <position position="104"/>
    </location>
    <ligand>
        <name>Mg(2+)</name>
        <dbReference type="ChEBI" id="CHEBI:18420"/>
    </ligand>
</feature>
<feature type="binding site" evidence="1">
    <location>
        <position position="171"/>
    </location>
    <ligand>
        <name>K(+)</name>
        <dbReference type="ChEBI" id="CHEBI:29103"/>
    </ligand>
</feature>
<feature type="binding site" evidence="1">
    <location>
        <position position="172"/>
    </location>
    <ligand>
        <name>K(+)</name>
        <dbReference type="ChEBI" id="CHEBI:29103"/>
    </ligand>
</feature>
<feature type="binding site" evidence="1">
    <location>
        <position position="180"/>
    </location>
    <ligand>
        <name>K(+)</name>
        <dbReference type="ChEBI" id="CHEBI:29103"/>
    </ligand>
</feature>
<feature type="binding site" evidence="1">
    <location>
        <position position="182"/>
    </location>
    <ligand>
        <name>K(+)</name>
        <dbReference type="ChEBI" id="CHEBI:29103"/>
    </ligand>
</feature>
<feature type="binding site" evidence="1">
    <location>
        <position position="185"/>
    </location>
    <ligand>
        <name>K(+)</name>
        <dbReference type="ChEBI" id="CHEBI:29103"/>
    </ligand>
</feature>
<sequence length="251" mass="28152">MAVHLLIVDALNLIRRVHAVQGSPCVETCQHALDQLIMHSQPTHAVAVFDDENRSSGWRHQRLPDYKAGRPPMPEELHDEMPALRTAFEQRGVPCWSASGNEADDLAATLAVKVTQAGHQATIVSTDKGYCQLLSPTLRIRDYFQKRWLDAPFIDKEFGVQPQQLPDYWGLAGISSSKVPGVAGIGPKSATQLLVEFQSLEGIYENLDAVAEKWRKKLETHKEMAFLCRDIARLQTDLHIDGNLQQLRLVR</sequence>
<reference key="1">
    <citation type="journal article" date="2009" name="PLoS Genet.">
        <title>Organised genome dynamics in the Escherichia coli species results in highly diverse adaptive paths.</title>
        <authorList>
            <person name="Touchon M."/>
            <person name="Hoede C."/>
            <person name="Tenaillon O."/>
            <person name="Barbe V."/>
            <person name="Baeriswyl S."/>
            <person name="Bidet P."/>
            <person name="Bingen E."/>
            <person name="Bonacorsi S."/>
            <person name="Bouchier C."/>
            <person name="Bouvet O."/>
            <person name="Calteau A."/>
            <person name="Chiapello H."/>
            <person name="Clermont O."/>
            <person name="Cruveiller S."/>
            <person name="Danchin A."/>
            <person name="Diard M."/>
            <person name="Dossat C."/>
            <person name="Karoui M.E."/>
            <person name="Frapy E."/>
            <person name="Garry L."/>
            <person name="Ghigo J.M."/>
            <person name="Gilles A.M."/>
            <person name="Johnson J."/>
            <person name="Le Bouguenec C."/>
            <person name="Lescat M."/>
            <person name="Mangenot S."/>
            <person name="Martinez-Jehanne V."/>
            <person name="Matic I."/>
            <person name="Nassif X."/>
            <person name="Oztas S."/>
            <person name="Petit M.A."/>
            <person name="Pichon C."/>
            <person name="Rouy Z."/>
            <person name="Ruf C.S."/>
            <person name="Schneider D."/>
            <person name="Tourret J."/>
            <person name="Vacherie B."/>
            <person name="Vallenet D."/>
            <person name="Medigue C."/>
            <person name="Rocha E.P.C."/>
            <person name="Denamur E."/>
        </authorList>
    </citation>
    <scope>NUCLEOTIDE SEQUENCE [LARGE SCALE GENOMIC DNA]</scope>
    <source>
        <strain>UMN026 / ExPEC</strain>
    </source>
</reference>
<accession>B7N732</accession>